<sequence length="208" mass="23103">MYDPMATAMNLVPMVVEQTSRGERAFDIFSRLLKERIIFLTGPVEDGMASLICAQLLFLESENPKKEIAMYINSPGGVVTAGLAIYDTMQYIKSPVSTVCMGMAASMGSLLLQAGAPGHRIALPNARIMVHQPSGGFRGQASDIERHAEDIIKTKRRLNEIYVKHTGRTYEEVEKTLDRDHFMSAEEAKAWGLIDHINESRDEADEKA</sequence>
<protein>
    <recommendedName>
        <fullName evidence="1">ATP-dependent Clp protease proteolytic subunit</fullName>
        <ecNumber evidence="1">3.4.21.92</ecNumber>
    </recommendedName>
    <alternativeName>
        <fullName evidence="1">Endopeptidase Clp</fullName>
    </alternativeName>
</protein>
<evidence type="ECO:0000255" key="1">
    <source>
        <dbReference type="HAMAP-Rule" id="MF_00444"/>
    </source>
</evidence>
<name>CLPP_CAUSK</name>
<keyword id="KW-0963">Cytoplasm</keyword>
<keyword id="KW-0378">Hydrolase</keyword>
<keyword id="KW-0645">Protease</keyword>
<keyword id="KW-0720">Serine protease</keyword>
<reference key="1">
    <citation type="submission" date="2008-01" db="EMBL/GenBank/DDBJ databases">
        <title>Complete sequence of chromosome of Caulobacter sp. K31.</title>
        <authorList>
            <consortium name="US DOE Joint Genome Institute"/>
            <person name="Copeland A."/>
            <person name="Lucas S."/>
            <person name="Lapidus A."/>
            <person name="Barry K."/>
            <person name="Glavina del Rio T."/>
            <person name="Dalin E."/>
            <person name="Tice H."/>
            <person name="Pitluck S."/>
            <person name="Bruce D."/>
            <person name="Goodwin L."/>
            <person name="Thompson L.S."/>
            <person name="Brettin T."/>
            <person name="Detter J.C."/>
            <person name="Han C."/>
            <person name="Schmutz J."/>
            <person name="Larimer F."/>
            <person name="Land M."/>
            <person name="Hauser L."/>
            <person name="Kyrpides N."/>
            <person name="Kim E."/>
            <person name="Stephens C."/>
            <person name="Richardson P."/>
        </authorList>
    </citation>
    <scope>NUCLEOTIDE SEQUENCE [LARGE SCALE GENOMIC DNA]</scope>
    <source>
        <strain>K31</strain>
    </source>
</reference>
<dbReference type="EC" id="3.4.21.92" evidence="1"/>
<dbReference type="EMBL" id="CP000927">
    <property type="protein sequence ID" value="ABZ71975.1"/>
    <property type="molecule type" value="Genomic_DNA"/>
</dbReference>
<dbReference type="SMR" id="B0SZQ2"/>
<dbReference type="STRING" id="366602.Caul_2848"/>
<dbReference type="MEROPS" id="S14.001"/>
<dbReference type="KEGG" id="cak:Caul_2848"/>
<dbReference type="eggNOG" id="COG0740">
    <property type="taxonomic scope" value="Bacteria"/>
</dbReference>
<dbReference type="HOGENOM" id="CLU_058707_3_2_5"/>
<dbReference type="OrthoDB" id="9802800at2"/>
<dbReference type="GO" id="GO:0005737">
    <property type="term" value="C:cytoplasm"/>
    <property type="evidence" value="ECO:0007669"/>
    <property type="project" value="UniProtKB-SubCell"/>
</dbReference>
<dbReference type="GO" id="GO:0009368">
    <property type="term" value="C:endopeptidase Clp complex"/>
    <property type="evidence" value="ECO:0007669"/>
    <property type="project" value="TreeGrafter"/>
</dbReference>
<dbReference type="GO" id="GO:0004176">
    <property type="term" value="F:ATP-dependent peptidase activity"/>
    <property type="evidence" value="ECO:0007669"/>
    <property type="project" value="InterPro"/>
</dbReference>
<dbReference type="GO" id="GO:0051117">
    <property type="term" value="F:ATPase binding"/>
    <property type="evidence" value="ECO:0007669"/>
    <property type="project" value="TreeGrafter"/>
</dbReference>
<dbReference type="GO" id="GO:0004252">
    <property type="term" value="F:serine-type endopeptidase activity"/>
    <property type="evidence" value="ECO:0007669"/>
    <property type="project" value="UniProtKB-UniRule"/>
</dbReference>
<dbReference type="GO" id="GO:0006515">
    <property type="term" value="P:protein quality control for misfolded or incompletely synthesized proteins"/>
    <property type="evidence" value="ECO:0007669"/>
    <property type="project" value="TreeGrafter"/>
</dbReference>
<dbReference type="CDD" id="cd07017">
    <property type="entry name" value="S14_ClpP_2"/>
    <property type="match status" value="1"/>
</dbReference>
<dbReference type="FunFam" id="3.90.226.10:FF:000001">
    <property type="entry name" value="ATP-dependent Clp protease proteolytic subunit"/>
    <property type="match status" value="1"/>
</dbReference>
<dbReference type="Gene3D" id="3.90.226.10">
    <property type="entry name" value="2-enoyl-CoA Hydratase, Chain A, domain 1"/>
    <property type="match status" value="1"/>
</dbReference>
<dbReference type="HAMAP" id="MF_00444">
    <property type="entry name" value="ClpP"/>
    <property type="match status" value="1"/>
</dbReference>
<dbReference type="InterPro" id="IPR001907">
    <property type="entry name" value="ClpP"/>
</dbReference>
<dbReference type="InterPro" id="IPR029045">
    <property type="entry name" value="ClpP/crotonase-like_dom_sf"/>
</dbReference>
<dbReference type="InterPro" id="IPR023562">
    <property type="entry name" value="ClpP/TepA"/>
</dbReference>
<dbReference type="InterPro" id="IPR033135">
    <property type="entry name" value="ClpP_His_AS"/>
</dbReference>
<dbReference type="InterPro" id="IPR018215">
    <property type="entry name" value="ClpP_Ser_AS"/>
</dbReference>
<dbReference type="NCBIfam" id="NF001368">
    <property type="entry name" value="PRK00277.1"/>
    <property type="match status" value="1"/>
</dbReference>
<dbReference type="NCBIfam" id="NF009205">
    <property type="entry name" value="PRK12553.1"/>
    <property type="match status" value="1"/>
</dbReference>
<dbReference type="PANTHER" id="PTHR10381">
    <property type="entry name" value="ATP-DEPENDENT CLP PROTEASE PROTEOLYTIC SUBUNIT"/>
    <property type="match status" value="1"/>
</dbReference>
<dbReference type="PANTHER" id="PTHR10381:SF70">
    <property type="entry name" value="ATP-DEPENDENT CLP PROTEASE PROTEOLYTIC SUBUNIT"/>
    <property type="match status" value="1"/>
</dbReference>
<dbReference type="Pfam" id="PF00574">
    <property type="entry name" value="CLP_protease"/>
    <property type="match status" value="1"/>
</dbReference>
<dbReference type="PRINTS" id="PR00127">
    <property type="entry name" value="CLPPROTEASEP"/>
</dbReference>
<dbReference type="SUPFAM" id="SSF52096">
    <property type="entry name" value="ClpP/crotonase"/>
    <property type="match status" value="1"/>
</dbReference>
<dbReference type="PROSITE" id="PS00382">
    <property type="entry name" value="CLP_PROTEASE_HIS"/>
    <property type="match status" value="1"/>
</dbReference>
<dbReference type="PROSITE" id="PS00381">
    <property type="entry name" value="CLP_PROTEASE_SER"/>
    <property type="match status" value="1"/>
</dbReference>
<accession>B0SZQ2</accession>
<feature type="chain" id="PRO_1000080884" description="ATP-dependent Clp protease proteolytic subunit">
    <location>
        <begin position="1"/>
        <end position="208"/>
    </location>
</feature>
<feature type="active site" description="Nucleophile" evidence="1">
    <location>
        <position position="106"/>
    </location>
</feature>
<feature type="active site" evidence="1">
    <location>
        <position position="131"/>
    </location>
</feature>
<gene>
    <name evidence="1" type="primary">clpP</name>
    <name type="ordered locus">Caul_2848</name>
</gene>
<comment type="function">
    <text evidence="1">Cleaves peptides in various proteins in a process that requires ATP hydrolysis. Has a chymotrypsin-like activity. Plays a major role in the degradation of misfolded proteins.</text>
</comment>
<comment type="catalytic activity">
    <reaction evidence="1">
        <text>Hydrolysis of proteins to small peptides in the presence of ATP and magnesium. alpha-casein is the usual test substrate. In the absence of ATP, only oligopeptides shorter than five residues are hydrolyzed (such as succinyl-Leu-Tyr-|-NHMec, and Leu-Tyr-Leu-|-Tyr-Trp, in which cleavage of the -Tyr-|-Leu- and -Tyr-|-Trp bonds also occurs).</text>
        <dbReference type="EC" id="3.4.21.92"/>
    </reaction>
</comment>
<comment type="subunit">
    <text evidence="1">Fourteen ClpP subunits assemble into 2 heptameric rings which stack back to back to give a disk-like structure with a central cavity, resembling the structure of eukaryotic proteasomes.</text>
</comment>
<comment type="subcellular location">
    <subcellularLocation>
        <location evidence="1">Cytoplasm</location>
    </subcellularLocation>
</comment>
<comment type="similarity">
    <text evidence="1">Belongs to the peptidase S14 family.</text>
</comment>
<organism>
    <name type="scientific">Caulobacter sp. (strain K31)</name>
    <dbReference type="NCBI Taxonomy" id="366602"/>
    <lineage>
        <taxon>Bacteria</taxon>
        <taxon>Pseudomonadati</taxon>
        <taxon>Pseudomonadota</taxon>
        <taxon>Alphaproteobacteria</taxon>
        <taxon>Caulobacterales</taxon>
        <taxon>Caulobacteraceae</taxon>
        <taxon>Caulobacter</taxon>
    </lineage>
</organism>
<proteinExistence type="inferred from homology"/>